<sequence length="125" mass="13943">MFRSVCRISSRVAPSAYRTIMGRSVMSNTILAQRFYSANLSKDQVSQRVIDVIKAFDKNSPNIANKQISSDTQFHKDLGLDSLDTVELLVAIEEEFDIEIPDKVADELRSVGETVDYIASNPDAN</sequence>
<gene>
    <name type="primary">ACP1</name>
    <name type="ordered locus">YKL192C</name>
</gene>
<dbReference type="EMBL" id="X69765">
    <property type="protein sequence ID" value="CAA49419.1"/>
    <property type="molecule type" value="Genomic_DNA"/>
</dbReference>
<dbReference type="EMBL" id="Z28192">
    <property type="protein sequence ID" value="CAA82036.1"/>
    <property type="molecule type" value="Genomic_DNA"/>
</dbReference>
<dbReference type="EMBL" id="AY558392">
    <property type="protein sequence ID" value="AAS56718.1"/>
    <property type="molecule type" value="Genomic_DNA"/>
</dbReference>
<dbReference type="EMBL" id="BK006944">
    <property type="protein sequence ID" value="DAA08974.1"/>
    <property type="molecule type" value="Genomic_DNA"/>
</dbReference>
<dbReference type="PIR" id="S33960">
    <property type="entry name" value="S33960"/>
</dbReference>
<dbReference type="RefSeq" id="NP_012729.1">
    <property type="nucleotide sequence ID" value="NM_001179758.1"/>
</dbReference>
<dbReference type="SMR" id="P32463"/>
<dbReference type="BioGRID" id="33929">
    <property type="interactions" value="61"/>
</dbReference>
<dbReference type="ComplexPortal" id="CPX-392">
    <property type="entry name" value="Mitochondrial NIAUFX iron-sulfur cluster assembly complex"/>
</dbReference>
<dbReference type="DIP" id="DIP-3990N"/>
<dbReference type="FunCoup" id="P32463">
    <property type="interactions" value="958"/>
</dbReference>
<dbReference type="IntAct" id="P32463">
    <property type="interactions" value="23"/>
</dbReference>
<dbReference type="MINT" id="P32463"/>
<dbReference type="STRING" id="4932.YKL192C"/>
<dbReference type="iPTMnet" id="P32463"/>
<dbReference type="PaxDb" id="4932-YKL192C"/>
<dbReference type="PeptideAtlas" id="P32463"/>
<dbReference type="EnsemblFungi" id="YKL192C_mRNA">
    <property type="protein sequence ID" value="YKL192C"/>
    <property type="gene ID" value="YKL192C"/>
</dbReference>
<dbReference type="GeneID" id="853642"/>
<dbReference type="KEGG" id="sce:YKL192C"/>
<dbReference type="AGR" id="SGD:S000001675"/>
<dbReference type="SGD" id="S000001675">
    <property type="gene designation" value="ACP1"/>
</dbReference>
<dbReference type="VEuPathDB" id="FungiDB:YKL192C"/>
<dbReference type="eggNOG" id="KOG1748">
    <property type="taxonomic scope" value="Eukaryota"/>
</dbReference>
<dbReference type="GeneTree" id="ENSGT00390000002127"/>
<dbReference type="HOGENOM" id="CLU_108696_0_2_1"/>
<dbReference type="InParanoid" id="P32463"/>
<dbReference type="OMA" id="RFKTPRD"/>
<dbReference type="OrthoDB" id="448946at2759"/>
<dbReference type="BioCyc" id="YEAST:G3O-31954-MONOMER"/>
<dbReference type="Reactome" id="R-SCE-77289">
    <property type="pathway name" value="Mitochondrial Fatty Acid Beta-Oxidation"/>
</dbReference>
<dbReference type="Reactome" id="R-SCE-9857492">
    <property type="pathway name" value="Protein lipoylation"/>
</dbReference>
<dbReference type="UniPathway" id="UPA00094"/>
<dbReference type="BioGRID-ORCS" id="853642">
    <property type="hits" value="7 hits in 10 CRISPR screens"/>
</dbReference>
<dbReference type="PRO" id="PR:P32463"/>
<dbReference type="Proteomes" id="UP000002311">
    <property type="component" value="Chromosome XI"/>
</dbReference>
<dbReference type="RNAct" id="P32463">
    <property type="molecule type" value="protein"/>
</dbReference>
<dbReference type="GO" id="GO:1990229">
    <property type="term" value="C:iron-sulfur cluster assembly complex"/>
    <property type="evidence" value="ECO:0000303"/>
    <property type="project" value="ComplexPortal"/>
</dbReference>
<dbReference type="GO" id="GO:0099128">
    <property type="term" value="C:mitochondrial [2Fe-2S] assembly complex"/>
    <property type="evidence" value="ECO:0000353"/>
    <property type="project" value="SGD"/>
</dbReference>
<dbReference type="GO" id="GO:0005739">
    <property type="term" value="C:mitochondrion"/>
    <property type="evidence" value="ECO:0007005"/>
    <property type="project" value="SGD"/>
</dbReference>
<dbReference type="GO" id="GO:0000035">
    <property type="term" value="F:acyl binding"/>
    <property type="evidence" value="ECO:0000318"/>
    <property type="project" value="GO_Central"/>
</dbReference>
<dbReference type="GO" id="GO:0000036">
    <property type="term" value="F:acyl carrier activity"/>
    <property type="evidence" value="ECO:0000250"/>
    <property type="project" value="SGD"/>
</dbReference>
<dbReference type="GO" id="GO:0016226">
    <property type="term" value="P:iron-sulfur cluster assembly"/>
    <property type="evidence" value="ECO:0000315"/>
    <property type="project" value="SGD"/>
</dbReference>
<dbReference type="GO" id="GO:0009107">
    <property type="term" value="P:lipoate biosynthetic process"/>
    <property type="evidence" value="ECO:0000315"/>
    <property type="project" value="SGD"/>
</dbReference>
<dbReference type="FunFam" id="1.10.1200.10:FF:000003">
    <property type="entry name" value="Acyl carrier protein"/>
    <property type="match status" value="1"/>
</dbReference>
<dbReference type="Gene3D" id="1.10.1200.10">
    <property type="entry name" value="ACP-like"/>
    <property type="match status" value="1"/>
</dbReference>
<dbReference type="HAMAP" id="MF_01217">
    <property type="entry name" value="Acyl_carrier"/>
    <property type="match status" value="1"/>
</dbReference>
<dbReference type="InterPro" id="IPR003231">
    <property type="entry name" value="ACP"/>
</dbReference>
<dbReference type="InterPro" id="IPR036736">
    <property type="entry name" value="ACP-like_sf"/>
</dbReference>
<dbReference type="InterPro" id="IPR009081">
    <property type="entry name" value="PP-bd_ACP"/>
</dbReference>
<dbReference type="InterPro" id="IPR006162">
    <property type="entry name" value="Ppantetheine_attach_site"/>
</dbReference>
<dbReference type="NCBIfam" id="TIGR00517">
    <property type="entry name" value="acyl_carrier"/>
    <property type="match status" value="1"/>
</dbReference>
<dbReference type="NCBIfam" id="NF002148">
    <property type="entry name" value="PRK00982.1-2"/>
    <property type="match status" value="1"/>
</dbReference>
<dbReference type="PANTHER" id="PTHR20863">
    <property type="entry name" value="ACYL CARRIER PROTEIN"/>
    <property type="match status" value="1"/>
</dbReference>
<dbReference type="PANTHER" id="PTHR20863:SF28">
    <property type="entry name" value="ACYL CARRIER PROTEIN, MITOCHONDRIAL"/>
    <property type="match status" value="1"/>
</dbReference>
<dbReference type="Pfam" id="PF00550">
    <property type="entry name" value="PP-binding"/>
    <property type="match status" value="1"/>
</dbReference>
<dbReference type="SUPFAM" id="SSF47336">
    <property type="entry name" value="ACP-like"/>
    <property type="match status" value="1"/>
</dbReference>
<dbReference type="PROSITE" id="PS50075">
    <property type="entry name" value="CARRIER"/>
    <property type="match status" value="1"/>
</dbReference>
<dbReference type="PROSITE" id="PS00012">
    <property type="entry name" value="PHOSPHOPANTETHEINE"/>
    <property type="match status" value="1"/>
</dbReference>
<keyword id="KW-0249">Electron transport</keyword>
<keyword id="KW-0275">Fatty acid biosynthesis</keyword>
<keyword id="KW-0276">Fatty acid metabolism</keyword>
<keyword id="KW-0444">Lipid biosynthesis</keyword>
<keyword id="KW-0443">Lipid metabolism</keyword>
<keyword id="KW-0496">Mitochondrion</keyword>
<keyword id="KW-0596">Phosphopantetheine</keyword>
<keyword id="KW-0597">Phosphoprotein</keyword>
<keyword id="KW-1185">Reference proteome</keyword>
<keyword id="KW-0679">Respiratory chain</keyword>
<keyword id="KW-0809">Transit peptide</keyword>
<keyword id="KW-0813">Transport</keyword>
<evidence type="ECO:0000250" key="1"/>
<evidence type="ECO:0000255" key="2"/>
<evidence type="ECO:0000255" key="3">
    <source>
        <dbReference type="PROSITE-ProRule" id="PRU00258"/>
    </source>
</evidence>
<evidence type="ECO:0000269" key="4">
    <source>
    </source>
</evidence>
<evidence type="ECO:0000305" key="5"/>
<reference key="1">
    <citation type="journal article" date="1993" name="Yeast">
        <title>DNA sequence analysis of the YCN2 region of chromosome XI in Saccharomyces cerevisiae.</title>
        <authorList>
            <person name="Cheret G."/>
            <person name="Mattheakis L.C."/>
            <person name="Sor F."/>
        </authorList>
    </citation>
    <scope>NUCLEOTIDE SEQUENCE [GENOMIC DNA]</scope>
    <source>
        <strain>S288c / GRF88</strain>
    </source>
</reference>
<reference key="2">
    <citation type="journal article" date="1994" name="Nature">
        <title>Complete DNA sequence of yeast chromosome XI.</title>
        <authorList>
            <person name="Dujon B."/>
            <person name="Alexandraki D."/>
            <person name="Andre B."/>
            <person name="Ansorge W."/>
            <person name="Baladron V."/>
            <person name="Ballesta J.P.G."/>
            <person name="Banrevi A."/>
            <person name="Bolle P.-A."/>
            <person name="Bolotin-Fukuhara M."/>
            <person name="Bossier P."/>
            <person name="Bou G."/>
            <person name="Boyer J."/>
            <person name="Buitrago M.J."/>
            <person name="Cheret G."/>
            <person name="Colleaux L."/>
            <person name="Daignan-Fornier B."/>
            <person name="del Rey F."/>
            <person name="Dion C."/>
            <person name="Domdey H."/>
            <person name="Duesterhoeft A."/>
            <person name="Duesterhus S."/>
            <person name="Entian K.-D."/>
            <person name="Erfle H."/>
            <person name="Esteban P.F."/>
            <person name="Feldmann H."/>
            <person name="Fernandes L."/>
            <person name="Fobo G.M."/>
            <person name="Fritz C."/>
            <person name="Fukuhara H."/>
            <person name="Gabel C."/>
            <person name="Gaillon L."/>
            <person name="Garcia-Cantalejo J.M."/>
            <person name="Garcia-Ramirez J.J."/>
            <person name="Gent M.E."/>
            <person name="Ghazvini M."/>
            <person name="Goffeau A."/>
            <person name="Gonzalez A."/>
            <person name="Grothues D."/>
            <person name="Guerreiro P."/>
            <person name="Hegemann J.H."/>
            <person name="Hewitt N."/>
            <person name="Hilger F."/>
            <person name="Hollenberg C.P."/>
            <person name="Horaitis O."/>
            <person name="Indge K.J."/>
            <person name="Jacquier A."/>
            <person name="James C.M."/>
            <person name="Jauniaux J.-C."/>
            <person name="Jimenez A."/>
            <person name="Keuchel H."/>
            <person name="Kirchrath L."/>
            <person name="Kleine K."/>
            <person name="Koetter P."/>
            <person name="Legrain P."/>
            <person name="Liebl S."/>
            <person name="Louis E.J."/>
            <person name="Maia e Silva A."/>
            <person name="Marck C."/>
            <person name="Monnier A.-L."/>
            <person name="Moestl D."/>
            <person name="Mueller S."/>
            <person name="Obermaier B."/>
            <person name="Oliver S.G."/>
            <person name="Pallier C."/>
            <person name="Pascolo S."/>
            <person name="Pfeiffer F."/>
            <person name="Philippsen P."/>
            <person name="Planta R.J."/>
            <person name="Pohl F.M."/>
            <person name="Pohl T.M."/>
            <person name="Poehlmann R."/>
            <person name="Portetelle D."/>
            <person name="Purnelle B."/>
            <person name="Puzos V."/>
            <person name="Ramezani Rad M."/>
            <person name="Rasmussen S.W."/>
            <person name="Remacha M.A."/>
            <person name="Revuelta J.L."/>
            <person name="Richard G.-F."/>
            <person name="Rieger M."/>
            <person name="Rodrigues-Pousada C."/>
            <person name="Rose M."/>
            <person name="Rupp T."/>
            <person name="Santos M.A."/>
            <person name="Schwager C."/>
            <person name="Sensen C."/>
            <person name="Skala J."/>
            <person name="Soares H."/>
            <person name="Sor F."/>
            <person name="Stegemann J."/>
            <person name="Tettelin H."/>
            <person name="Thierry A."/>
            <person name="Tzermia M."/>
            <person name="Urrestarazu L.A."/>
            <person name="van Dyck L."/>
            <person name="van Vliet-Reedijk J.C."/>
            <person name="Valens M."/>
            <person name="Vandenbol M."/>
            <person name="Vilela C."/>
            <person name="Vissers S."/>
            <person name="von Wettstein D."/>
            <person name="Voss H."/>
            <person name="Wiemann S."/>
            <person name="Xu G."/>
            <person name="Zimmermann J."/>
            <person name="Haasemann M."/>
            <person name="Becker I."/>
            <person name="Mewes H.-W."/>
        </authorList>
    </citation>
    <scope>NUCLEOTIDE SEQUENCE [LARGE SCALE GENOMIC DNA]</scope>
    <source>
        <strain>ATCC 204508 / S288c</strain>
    </source>
</reference>
<reference key="3">
    <citation type="journal article" date="2014" name="G3 (Bethesda)">
        <title>The reference genome sequence of Saccharomyces cerevisiae: Then and now.</title>
        <authorList>
            <person name="Engel S.R."/>
            <person name="Dietrich F.S."/>
            <person name="Fisk D.G."/>
            <person name="Binkley G."/>
            <person name="Balakrishnan R."/>
            <person name="Costanzo M.C."/>
            <person name="Dwight S.S."/>
            <person name="Hitz B.C."/>
            <person name="Karra K."/>
            <person name="Nash R.S."/>
            <person name="Weng S."/>
            <person name="Wong E.D."/>
            <person name="Lloyd P."/>
            <person name="Skrzypek M.S."/>
            <person name="Miyasato S.R."/>
            <person name="Simison M."/>
            <person name="Cherry J.M."/>
        </authorList>
    </citation>
    <scope>GENOME REANNOTATION</scope>
    <source>
        <strain>ATCC 204508 / S288c</strain>
    </source>
</reference>
<reference key="4">
    <citation type="journal article" date="2007" name="Genome Res.">
        <title>Approaching a complete repository of sequence-verified protein-encoding clones for Saccharomyces cerevisiae.</title>
        <authorList>
            <person name="Hu Y."/>
            <person name="Rolfs A."/>
            <person name="Bhullar B."/>
            <person name="Murthy T.V.S."/>
            <person name="Zhu C."/>
            <person name="Berger M.F."/>
            <person name="Camargo A.A."/>
            <person name="Kelley F."/>
            <person name="McCarron S."/>
            <person name="Jepson D."/>
            <person name="Richardson A."/>
            <person name="Raphael J."/>
            <person name="Moreira D."/>
            <person name="Taycher E."/>
            <person name="Zuo D."/>
            <person name="Mohr S."/>
            <person name="Kane M.F."/>
            <person name="Williamson J."/>
            <person name="Simpson A.J.G."/>
            <person name="Bulyk M.L."/>
            <person name="Harlow E."/>
            <person name="Marsischky G."/>
            <person name="Kolodner R.D."/>
            <person name="LaBaer J."/>
        </authorList>
    </citation>
    <scope>NUCLEOTIDE SEQUENCE [GENOMIC DNA]</scope>
    <source>
        <strain>ATCC 204508 / S288c</strain>
    </source>
</reference>
<reference key="5">
    <citation type="journal article" date="2003" name="Nature">
        <title>Global analysis of protein expression in yeast.</title>
        <authorList>
            <person name="Ghaemmaghami S."/>
            <person name="Huh W.-K."/>
            <person name="Bower K."/>
            <person name="Howson R.W."/>
            <person name="Belle A."/>
            <person name="Dephoure N."/>
            <person name="O'Shea E.K."/>
            <person name="Weissman J.S."/>
        </authorList>
    </citation>
    <scope>LEVEL OF PROTEIN EXPRESSION [LARGE SCALE ANALYSIS]</scope>
</reference>
<protein>
    <recommendedName>
        <fullName>Acyl carrier protein, mitochondrial</fullName>
        <shortName>ACP</shortName>
    </recommendedName>
    <alternativeName>
        <fullName>NADH-ubiquinone oxidoreductase 9.6 kDa subunit</fullName>
    </alternativeName>
</protein>
<organism>
    <name type="scientific">Saccharomyces cerevisiae (strain ATCC 204508 / S288c)</name>
    <name type="common">Baker's yeast</name>
    <dbReference type="NCBI Taxonomy" id="559292"/>
    <lineage>
        <taxon>Eukaryota</taxon>
        <taxon>Fungi</taxon>
        <taxon>Dikarya</taxon>
        <taxon>Ascomycota</taxon>
        <taxon>Saccharomycotina</taxon>
        <taxon>Saccharomycetes</taxon>
        <taxon>Saccharomycetales</taxon>
        <taxon>Saccharomycetaceae</taxon>
        <taxon>Saccharomyces</taxon>
    </lineage>
</organism>
<accession>P32463</accession>
<accession>D6VX08</accession>
<name>ACPM_YEAST</name>
<feature type="transit peptide" description="Mitochondrion" evidence="2">
    <location>
        <begin position="1"/>
        <end position="36"/>
    </location>
</feature>
<feature type="chain" id="PRO_0000000566" description="Acyl carrier protein, mitochondrial">
    <location>
        <begin position="37"/>
        <end position="125"/>
    </location>
</feature>
<feature type="domain" description="Carrier" evidence="3">
    <location>
        <begin position="43"/>
        <end position="122"/>
    </location>
</feature>
<feature type="modified residue" description="O-(pantetheine 4'-phosphoryl)serine" evidence="3">
    <location>
        <position position="82"/>
    </location>
</feature>
<comment type="function">
    <text evidence="1">Carrier of the growing fatty acid chain in fatty acid biosynthesis (By similarity). May be involved in the synthesis of very-long-chain fatty acids. Accessory and non-catalytic subunit of the mitochondrial membrane respiratory chain NADH dehydrogenase (Complex I), which functions in the transfer of electrons from NADH to the respiratory chain (By similarity).</text>
</comment>
<comment type="pathway">
    <text>Lipid metabolism; fatty acid biosynthesis.</text>
</comment>
<comment type="subunit">
    <text>Complex I is composed of about 30 different subunits.</text>
</comment>
<comment type="subcellular location">
    <subcellularLocation>
        <location>Mitochondrion</location>
    </subcellularLocation>
</comment>
<comment type="PTM">
    <text evidence="1">4'-phosphopantetheine is transferred from CoA to a specific serine of apo-ACP by acpS. This modification is essential for activity because fatty acids are bound in thioester linkage to the sulfhydryl of the prosthetic group (By similarity).</text>
</comment>
<comment type="miscellaneous">
    <text evidence="4">Present with 60500 molecules/cell in log phase SD medium.</text>
</comment>
<comment type="similarity">
    <text evidence="5">Belongs to the acyl carrier protein (ACP) family.</text>
</comment>
<proteinExistence type="evidence at protein level"/>